<comment type="function">
    <text evidence="2">In complex with CCZ1, is required for multiple vacuole delivery pathways including the cytoplasm to vacuole transport (Cvt), autophagy, pexophagy and endocytosis. The MON1-CCZ1 complex acts at the fusion of vesicles with the vacuole, through its regulation of the SNARE complex during the coordinated priming and docking stages of fusion, and particularly at the stage of tethering/docking.</text>
</comment>
<comment type="subcellular location">
    <subcellularLocation>
        <location evidence="1">Endosome</location>
        <location evidence="1">Multivesicular body membrane</location>
        <topology evidence="1">Peripheral membrane protein</topology>
    </subcellularLocation>
    <subcellularLocation>
        <location evidence="1">Prevacuolar compartment membrane</location>
        <topology evidence="1">Peripheral membrane protein</topology>
    </subcellularLocation>
    <subcellularLocation>
        <location evidence="1">Vacuole membrane</location>
        <topology evidence="1">Peripheral membrane protein</topology>
    </subcellularLocation>
</comment>
<comment type="similarity">
    <text evidence="4">Belongs to the MON1/SAND family.</text>
</comment>
<comment type="sequence caution" evidence="4">
    <conflict type="erroneous gene model prediction">
        <sequence resource="EMBL-CDS" id="EAT80504"/>
    </conflict>
</comment>
<feature type="chain" id="PRO_0000278865" description="Vacuolar fusion protein MON1">
    <location>
        <begin position="1"/>
        <end position="722"/>
    </location>
</feature>
<feature type="region of interest" description="Disordered" evidence="3">
    <location>
        <begin position="1"/>
        <end position="58"/>
    </location>
</feature>
<feature type="compositionally biased region" description="Polar residues" evidence="3">
    <location>
        <begin position="9"/>
        <end position="21"/>
    </location>
</feature>
<sequence>MAPLRGPTRASTSGISSQSREGTPPPLPPRPQLGNLPSRPSTSYSIRKAPSRPQLVSKATTQLSLSTGQAFGTESRDDAASIATKQRSFLGANLHSHSTSDADDSASIRSYMPGTEGVGEGESILGEVLGHEQKTDTEKTLLRSLGHKFGDGEAQSMFPPDPQFDAAFNREFDEVDEMSVDGSNEEAVMRQWRAKLKHFLILSSAGKPIYSRHGDDQLITNYIGVVQTIISFYQSTNDVLRGFTAGDVRFVVMSKGPLNLVAITRLPESDSQLRTQLEALYMQILSTLTLPSLERMFAARANYDLRRPLQGTDTLLSALADGFTRGSSSTLLSALECLKLRKSHRTTINNTLLKTRSENLLYGLIVASGKLVSVVRPKKHSLHPGDLHLIFNMLFEAGSVKAGGGENWIPLCLPGFNNTGYLYMYVSFLNLEHPTEQMQERPSTSEGAPDEVAILLISAEKESFFELRSMRDDLVETLQRNGSIEAMRAAVRQGRPKCTDIVPGSPLRHFLYKSRGNVQFTMPSFEPYFENALDKRRLLNLYNKLHSNVHNKPTTLKVHHETGTSCIALAWSTPLFELYAVAPAATSRAALAQSANKIIQTKLPSREKMNSFYGTLRLLSREFAPCPLPRSSHTESCKWQLNVRHIHANQYLSNWNAAGAQTFSHQSPTQSPWVCIDWIGRYLDEARSKVTQSATMPSGPLGRRVISPDEVRLYPHSCVQEA</sequence>
<organism>
    <name type="scientific">Phaeosphaeria nodorum (strain SN15 / ATCC MYA-4574 / FGSC 10173)</name>
    <name type="common">Glume blotch fungus</name>
    <name type="synonym">Parastagonospora nodorum</name>
    <dbReference type="NCBI Taxonomy" id="321614"/>
    <lineage>
        <taxon>Eukaryota</taxon>
        <taxon>Fungi</taxon>
        <taxon>Dikarya</taxon>
        <taxon>Ascomycota</taxon>
        <taxon>Pezizomycotina</taxon>
        <taxon>Dothideomycetes</taxon>
        <taxon>Pleosporomycetidae</taxon>
        <taxon>Pleosporales</taxon>
        <taxon>Pleosporineae</taxon>
        <taxon>Phaeosphaeriaceae</taxon>
        <taxon>Parastagonospora</taxon>
    </lineage>
</organism>
<name>MON1_PHANO</name>
<dbReference type="EMBL" id="CH445345">
    <property type="protein sequence ID" value="EAT80504.2"/>
    <property type="status" value="ALT_SEQ"/>
    <property type="molecule type" value="Genomic_DNA"/>
</dbReference>
<dbReference type="RefSeq" id="XP_001802326.1">
    <property type="nucleotide sequence ID" value="XM_001802274.1"/>
</dbReference>
<dbReference type="SMR" id="Q0U822"/>
<dbReference type="FunCoup" id="Q0U822">
    <property type="interactions" value="490"/>
</dbReference>
<dbReference type="STRING" id="321614.Q0U822"/>
<dbReference type="GeneID" id="5979236"/>
<dbReference type="KEGG" id="pno:SNOG_12092"/>
<dbReference type="VEuPathDB" id="FungiDB:JI435_120920"/>
<dbReference type="eggNOG" id="KOG0997">
    <property type="taxonomic scope" value="Eukaryota"/>
</dbReference>
<dbReference type="InParanoid" id="Q0U822"/>
<dbReference type="OMA" id="INTACMA"/>
<dbReference type="Proteomes" id="UP000001055">
    <property type="component" value="Unassembled WGS sequence"/>
</dbReference>
<dbReference type="GO" id="GO:0000329">
    <property type="term" value="C:fungal-type vacuole membrane"/>
    <property type="evidence" value="ECO:0000318"/>
    <property type="project" value="GO_Central"/>
</dbReference>
<dbReference type="GO" id="GO:0035658">
    <property type="term" value="C:Mon1-Ccz1 complex"/>
    <property type="evidence" value="ECO:0000318"/>
    <property type="project" value="GO_Central"/>
</dbReference>
<dbReference type="GO" id="GO:0032585">
    <property type="term" value="C:multivesicular body membrane"/>
    <property type="evidence" value="ECO:0007669"/>
    <property type="project" value="UniProtKB-SubCell"/>
</dbReference>
<dbReference type="GO" id="GO:0006914">
    <property type="term" value="P:autophagy"/>
    <property type="evidence" value="ECO:0007669"/>
    <property type="project" value="UniProtKB-KW"/>
</dbReference>
<dbReference type="GO" id="GO:0006623">
    <property type="term" value="P:protein targeting to vacuole"/>
    <property type="evidence" value="ECO:0000318"/>
    <property type="project" value="GO_Central"/>
</dbReference>
<dbReference type="GO" id="GO:0016192">
    <property type="term" value="P:vesicle-mediated transport"/>
    <property type="evidence" value="ECO:0007669"/>
    <property type="project" value="InterPro"/>
</dbReference>
<dbReference type="InterPro" id="IPR043972">
    <property type="entry name" value="FUZ/MON1/HPS1_longin_1"/>
</dbReference>
<dbReference type="InterPro" id="IPR043971">
    <property type="entry name" value="FUZ/MON1/HPS1_longin_2"/>
</dbReference>
<dbReference type="InterPro" id="IPR043970">
    <property type="entry name" value="FUZ/MON1/HPS1_longin_3"/>
</dbReference>
<dbReference type="InterPro" id="IPR004353">
    <property type="entry name" value="Mon1"/>
</dbReference>
<dbReference type="PANTHER" id="PTHR13027">
    <property type="entry name" value="SAND PROTEIN-RELATED"/>
    <property type="match status" value="1"/>
</dbReference>
<dbReference type="PANTHER" id="PTHR13027:SF7">
    <property type="entry name" value="VACUOLAR FUSION PROTEIN MON1 HOMOLOG"/>
    <property type="match status" value="1"/>
</dbReference>
<dbReference type="Pfam" id="PF19036">
    <property type="entry name" value="Fuz_longin_1"/>
    <property type="match status" value="1"/>
</dbReference>
<dbReference type="Pfam" id="PF19037">
    <property type="entry name" value="Fuz_longin_2"/>
    <property type="match status" value="1"/>
</dbReference>
<dbReference type="Pfam" id="PF19038">
    <property type="entry name" value="Fuz_longin_3"/>
    <property type="match status" value="1"/>
</dbReference>
<dbReference type="PRINTS" id="PR01546">
    <property type="entry name" value="YEAST73DUF"/>
</dbReference>
<accession>Q0U822</accession>
<gene>
    <name type="primary">MON1</name>
    <name type="ORF">SNOG_12092</name>
</gene>
<reference key="1">
    <citation type="journal article" date="2007" name="Plant Cell">
        <title>Dothideomycete-plant interactions illuminated by genome sequencing and EST analysis of the wheat pathogen Stagonospora nodorum.</title>
        <authorList>
            <person name="Hane J.K."/>
            <person name="Lowe R.G.T."/>
            <person name="Solomon P.S."/>
            <person name="Tan K.-C."/>
            <person name="Schoch C.L."/>
            <person name="Spatafora J.W."/>
            <person name="Crous P.W."/>
            <person name="Kodira C.D."/>
            <person name="Birren B.W."/>
            <person name="Galagan J.E."/>
            <person name="Torriani S.F.F."/>
            <person name="McDonald B.A."/>
            <person name="Oliver R.P."/>
        </authorList>
    </citation>
    <scope>NUCLEOTIDE SEQUENCE [LARGE SCALE GENOMIC DNA]</scope>
    <source>
        <strain>SN15 / ATCC MYA-4574 / FGSC 10173</strain>
    </source>
</reference>
<evidence type="ECO:0000250" key="1"/>
<evidence type="ECO:0000250" key="2">
    <source>
        <dbReference type="UniProtKB" id="P53129"/>
    </source>
</evidence>
<evidence type="ECO:0000256" key="3">
    <source>
        <dbReference type="SAM" id="MobiDB-lite"/>
    </source>
</evidence>
<evidence type="ECO:0000305" key="4"/>
<protein>
    <recommendedName>
        <fullName>Vacuolar fusion protein MON1</fullName>
    </recommendedName>
</protein>
<proteinExistence type="inferred from homology"/>
<keyword id="KW-0072">Autophagy</keyword>
<keyword id="KW-0967">Endosome</keyword>
<keyword id="KW-0472">Membrane</keyword>
<keyword id="KW-0653">Protein transport</keyword>
<keyword id="KW-0813">Transport</keyword>
<keyword id="KW-0926">Vacuole</keyword>